<gene>
    <name evidence="1" type="primary">glyA</name>
    <name type="ordered locus">BruAb1_0781</name>
</gene>
<keyword id="KW-0028">Amino-acid biosynthesis</keyword>
<keyword id="KW-0963">Cytoplasm</keyword>
<keyword id="KW-0554">One-carbon metabolism</keyword>
<keyword id="KW-0663">Pyridoxal phosphate</keyword>
<keyword id="KW-0808">Transferase</keyword>
<sequence length="438" mass="47161">MSQANAATKAYSDVFFNASLEDIDPEIFGAIRNELGRQRHEIELIASENIVSRAVLEAQGSILTNKYAEGYPGKRYYGGCQYVDVVEELAIERAKKLFGAEFANVQPNSGSQMNQAVFLALLQPGDTFMGLDLNSGGHLTHGSPVNMSGKWFNVVSYGVRKDDHLLDMDEVARLARENKPKLILAGGTAYSRIWDWKRFREIADEVGAYLMVDMAHIAGLVAGGQHPSPVPHAHVCTTTTHKSLRGPRGGMILTNDADIAKKINSAVFPGLQGGPLMHVIAGKAVAFAEALKPEFKLYAKNVVDNARALAEELKSHGLDIVSGGTDNHLMLVDLRPKNATGKRAEAALGRANITCNKNGIPFDPEKPFVTSGVRLGTPAGTTRGFGVAEFKEIGSLIAEVLDGLKVANSDEGNAAVEQAVKEKVIALTGRFPMYGYQG</sequence>
<name>GLYA_BRUAB</name>
<evidence type="ECO:0000255" key="1">
    <source>
        <dbReference type="HAMAP-Rule" id="MF_00051"/>
    </source>
</evidence>
<organism>
    <name type="scientific">Brucella abortus biovar 1 (strain 9-941)</name>
    <dbReference type="NCBI Taxonomy" id="262698"/>
    <lineage>
        <taxon>Bacteria</taxon>
        <taxon>Pseudomonadati</taxon>
        <taxon>Pseudomonadota</taxon>
        <taxon>Alphaproteobacteria</taxon>
        <taxon>Hyphomicrobiales</taxon>
        <taxon>Brucellaceae</taxon>
        <taxon>Brucella/Ochrobactrum group</taxon>
        <taxon>Brucella</taxon>
    </lineage>
</organism>
<comment type="function">
    <text evidence="1">Catalyzes the reversible interconversion of serine and glycine with tetrahydrofolate (THF) serving as the one-carbon carrier. This reaction serves as the major source of one-carbon groups required for the biosynthesis of purines, thymidylate, methionine, and other important biomolecules. Also exhibits THF-independent aldolase activity toward beta-hydroxyamino acids, producing glycine and aldehydes, via a retro-aldol mechanism.</text>
</comment>
<comment type="catalytic activity">
    <reaction evidence="1">
        <text>(6R)-5,10-methylene-5,6,7,8-tetrahydrofolate + glycine + H2O = (6S)-5,6,7,8-tetrahydrofolate + L-serine</text>
        <dbReference type="Rhea" id="RHEA:15481"/>
        <dbReference type="ChEBI" id="CHEBI:15377"/>
        <dbReference type="ChEBI" id="CHEBI:15636"/>
        <dbReference type="ChEBI" id="CHEBI:33384"/>
        <dbReference type="ChEBI" id="CHEBI:57305"/>
        <dbReference type="ChEBI" id="CHEBI:57453"/>
        <dbReference type="EC" id="2.1.2.1"/>
    </reaction>
</comment>
<comment type="cofactor">
    <cofactor evidence="1">
        <name>pyridoxal 5'-phosphate</name>
        <dbReference type="ChEBI" id="CHEBI:597326"/>
    </cofactor>
</comment>
<comment type="pathway">
    <text evidence="1">One-carbon metabolism; tetrahydrofolate interconversion.</text>
</comment>
<comment type="pathway">
    <text evidence="1">Amino-acid biosynthesis; glycine biosynthesis; glycine from L-serine: step 1/1.</text>
</comment>
<comment type="subunit">
    <text evidence="1">Homodimer.</text>
</comment>
<comment type="subcellular location">
    <subcellularLocation>
        <location evidence="1">Cytoplasm</location>
    </subcellularLocation>
</comment>
<comment type="similarity">
    <text evidence="1">Belongs to the SHMT family.</text>
</comment>
<reference key="1">
    <citation type="journal article" date="2005" name="J. Bacteriol.">
        <title>Completion of the genome sequence of Brucella abortus and comparison to the highly similar genomes of Brucella melitensis and Brucella suis.</title>
        <authorList>
            <person name="Halling S.M."/>
            <person name="Peterson-Burch B.D."/>
            <person name="Bricker B.J."/>
            <person name="Zuerner R.L."/>
            <person name="Qing Z."/>
            <person name="Li L.-L."/>
            <person name="Kapur V."/>
            <person name="Alt D.P."/>
            <person name="Olsen S.C."/>
        </authorList>
    </citation>
    <scope>NUCLEOTIDE SEQUENCE [LARGE SCALE GENOMIC DNA]</scope>
    <source>
        <strain>9-941</strain>
    </source>
</reference>
<protein>
    <recommendedName>
        <fullName evidence="1">Serine hydroxymethyltransferase</fullName>
        <shortName evidence="1">SHMT</shortName>
        <shortName evidence="1">Serine methylase</shortName>
        <ecNumber evidence="1">2.1.2.1</ecNumber>
    </recommendedName>
</protein>
<dbReference type="EC" id="2.1.2.1" evidence="1"/>
<dbReference type="EMBL" id="AE017223">
    <property type="protein sequence ID" value="AAX74149.1"/>
    <property type="molecule type" value="Genomic_DNA"/>
</dbReference>
<dbReference type="RefSeq" id="WP_002966764.1">
    <property type="nucleotide sequence ID" value="NC_006932.1"/>
</dbReference>
<dbReference type="SMR" id="Q57DY5"/>
<dbReference type="EnsemblBacteria" id="AAX74149">
    <property type="protein sequence ID" value="AAX74149"/>
    <property type="gene ID" value="BruAb1_0781"/>
</dbReference>
<dbReference type="GeneID" id="93016845"/>
<dbReference type="KEGG" id="bmb:BruAb1_0781"/>
<dbReference type="HOGENOM" id="CLU_022477_2_1_5"/>
<dbReference type="UniPathway" id="UPA00193"/>
<dbReference type="UniPathway" id="UPA00288">
    <property type="reaction ID" value="UER01023"/>
</dbReference>
<dbReference type="PRO" id="PR:Q57DY5"/>
<dbReference type="Proteomes" id="UP000000540">
    <property type="component" value="Chromosome I"/>
</dbReference>
<dbReference type="GO" id="GO:0005829">
    <property type="term" value="C:cytosol"/>
    <property type="evidence" value="ECO:0007669"/>
    <property type="project" value="TreeGrafter"/>
</dbReference>
<dbReference type="GO" id="GO:0004372">
    <property type="term" value="F:glycine hydroxymethyltransferase activity"/>
    <property type="evidence" value="ECO:0007669"/>
    <property type="project" value="UniProtKB-UniRule"/>
</dbReference>
<dbReference type="GO" id="GO:0030170">
    <property type="term" value="F:pyridoxal phosphate binding"/>
    <property type="evidence" value="ECO:0007669"/>
    <property type="project" value="UniProtKB-UniRule"/>
</dbReference>
<dbReference type="GO" id="GO:0019264">
    <property type="term" value="P:glycine biosynthetic process from serine"/>
    <property type="evidence" value="ECO:0007669"/>
    <property type="project" value="UniProtKB-UniRule"/>
</dbReference>
<dbReference type="GO" id="GO:0035999">
    <property type="term" value="P:tetrahydrofolate interconversion"/>
    <property type="evidence" value="ECO:0007669"/>
    <property type="project" value="UniProtKB-UniRule"/>
</dbReference>
<dbReference type="CDD" id="cd00378">
    <property type="entry name" value="SHMT"/>
    <property type="match status" value="1"/>
</dbReference>
<dbReference type="FunFam" id="3.40.640.10:FF:000001">
    <property type="entry name" value="Serine hydroxymethyltransferase"/>
    <property type="match status" value="1"/>
</dbReference>
<dbReference type="FunFam" id="3.90.1150.10:FF:000003">
    <property type="entry name" value="Serine hydroxymethyltransferase"/>
    <property type="match status" value="1"/>
</dbReference>
<dbReference type="Gene3D" id="3.90.1150.10">
    <property type="entry name" value="Aspartate Aminotransferase, domain 1"/>
    <property type="match status" value="1"/>
</dbReference>
<dbReference type="Gene3D" id="3.40.640.10">
    <property type="entry name" value="Type I PLP-dependent aspartate aminotransferase-like (Major domain)"/>
    <property type="match status" value="1"/>
</dbReference>
<dbReference type="HAMAP" id="MF_00051">
    <property type="entry name" value="SHMT"/>
    <property type="match status" value="1"/>
</dbReference>
<dbReference type="InterPro" id="IPR015424">
    <property type="entry name" value="PyrdxlP-dep_Trfase"/>
</dbReference>
<dbReference type="InterPro" id="IPR015421">
    <property type="entry name" value="PyrdxlP-dep_Trfase_major"/>
</dbReference>
<dbReference type="InterPro" id="IPR015422">
    <property type="entry name" value="PyrdxlP-dep_Trfase_small"/>
</dbReference>
<dbReference type="InterPro" id="IPR001085">
    <property type="entry name" value="Ser_HO-MeTrfase"/>
</dbReference>
<dbReference type="InterPro" id="IPR049943">
    <property type="entry name" value="Ser_HO-MeTrfase-like"/>
</dbReference>
<dbReference type="InterPro" id="IPR019798">
    <property type="entry name" value="Ser_HO-MeTrfase_PLP_BS"/>
</dbReference>
<dbReference type="InterPro" id="IPR039429">
    <property type="entry name" value="SHMT-like_dom"/>
</dbReference>
<dbReference type="NCBIfam" id="NF000586">
    <property type="entry name" value="PRK00011.1"/>
    <property type="match status" value="1"/>
</dbReference>
<dbReference type="PANTHER" id="PTHR11680">
    <property type="entry name" value="SERINE HYDROXYMETHYLTRANSFERASE"/>
    <property type="match status" value="1"/>
</dbReference>
<dbReference type="PANTHER" id="PTHR11680:SF35">
    <property type="entry name" value="SERINE HYDROXYMETHYLTRANSFERASE 1"/>
    <property type="match status" value="1"/>
</dbReference>
<dbReference type="Pfam" id="PF00464">
    <property type="entry name" value="SHMT"/>
    <property type="match status" value="1"/>
</dbReference>
<dbReference type="PIRSF" id="PIRSF000412">
    <property type="entry name" value="SHMT"/>
    <property type="match status" value="1"/>
</dbReference>
<dbReference type="SUPFAM" id="SSF53383">
    <property type="entry name" value="PLP-dependent transferases"/>
    <property type="match status" value="1"/>
</dbReference>
<dbReference type="PROSITE" id="PS00096">
    <property type="entry name" value="SHMT"/>
    <property type="match status" value="1"/>
</dbReference>
<accession>Q57DY5</accession>
<feature type="chain" id="PRO_0000234953" description="Serine hydroxymethyltransferase">
    <location>
        <begin position="1"/>
        <end position="438"/>
    </location>
</feature>
<feature type="binding site" evidence="1">
    <location>
        <position position="133"/>
    </location>
    <ligand>
        <name>(6S)-5,6,7,8-tetrahydrofolate</name>
        <dbReference type="ChEBI" id="CHEBI:57453"/>
    </ligand>
</feature>
<feature type="binding site" evidence="1">
    <location>
        <begin position="137"/>
        <end position="139"/>
    </location>
    <ligand>
        <name>(6S)-5,6,7,8-tetrahydrofolate</name>
        <dbReference type="ChEBI" id="CHEBI:57453"/>
    </ligand>
</feature>
<feature type="site" description="Plays an important role in substrate specificity" evidence="1">
    <location>
        <position position="241"/>
    </location>
</feature>
<feature type="modified residue" description="N6-(pyridoxal phosphate)lysine" evidence="1">
    <location>
        <position position="242"/>
    </location>
</feature>
<proteinExistence type="inferred from homology"/>